<accession>Q6D3J6</accession>
<protein>
    <recommendedName>
        <fullName evidence="1">UPF0352 protein ECA2748</fullName>
    </recommendedName>
</protein>
<gene>
    <name type="ordered locus">ECA2748</name>
</gene>
<organism>
    <name type="scientific">Pectobacterium atrosepticum (strain SCRI 1043 / ATCC BAA-672)</name>
    <name type="common">Erwinia carotovora subsp. atroseptica</name>
    <dbReference type="NCBI Taxonomy" id="218491"/>
    <lineage>
        <taxon>Bacteria</taxon>
        <taxon>Pseudomonadati</taxon>
        <taxon>Pseudomonadota</taxon>
        <taxon>Gammaproteobacteria</taxon>
        <taxon>Enterobacterales</taxon>
        <taxon>Pectobacteriaceae</taxon>
        <taxon>Pectobacterium</taxon>
    </lineage>
</organism>
<reference key="1">
    <citation type="journal article" date="2004" name="Proc. Natl. Acad. Sci. U.S.A.">
        <title>Genome sequence of the enterobacterial phytopathogen Erwinia carotovora subsp. atroseptica and characterization of virulence factors.</title>
        <authorList>
            <person name="Bell K.S."/>
            <person name="Sebaihia M."/>
            <person name="Pritchard L."/>
            <person name="Holden M.T.G."/>
            <person name="Hyman L.J."/>
            <person name="Holeva M.C."/>
            <person name="Thomson N.R."/>
            <person name="Bentley S.D."/>
            <person name="Churcher L.J.C."/>
            <person name="Mungall K."/>
            <person name="Atkin R."/>
            <person name="Bason N."/>
            <person name="Brooks K."/>
            <person name="Chillingworth T."/>
            <person name="Clark K."/>
            <person name="Doggett J."/>
            <person name="Fraser A."/>
            <person name="Hance Z."/>
            <person name="Hauser H."/>
            <person name="Jagels K."/>
            <person name="Moule S."/>
            <person name="Norbertczak H."/>
            <person name="Ormond D."/>
            <person name="Price C."/>
            <person name="Quail M.A."/>
            <person name="Sanders M."/>
            <person name="Walker D."/>
            <person name="Whitehead S."/>
            <person name="Salmond G.P.C."/>
            <person name="Birch P.R.J."/>
            <person name="Parkhill J."/>
            <person name="Toth I.K."/>
        </authorList>
    </citation>
    <scope>NUCLEOTIDE SEQUENCE [LARGE SCALE GENOMIC DNA]</scope>
    <source>
        <strain>SCRI 1043 / ATCC BAA-672</strain>
    </source>
</reference>
<sequence>MPQSSRYSDEHVEQLLSEMVNVLEKHHAPTDLALMVLGNMVTNLINTSIAPAQRQILARSFAEALQASIKKADKAH</sequence>
<keyword id="KW-1185">Reference proteome</keyword>
<name>Y2748_PECAS</name>
<feature type="chain" id="PRO_0000201784" description="UPF0352 protein ECA2748">
    <location>
        <begin position="1"/>
        <end position="76"/>
    </location>
</feature>
<proteinExistence type="inferred from homology"/>
<dbReference type="EMBL" id="BX950851">
    <property type="protein sequence ID" value="CAG75648.1"/>
    <property type="molecule type" value="Genomic_DNA"/>
</dbReference>
<dbReference type="RefSeq" id="WP_011094285.1">
    <property type="nucleotide sequence ID" value="NC_004547.2"/>
</dbReference>
<dbReference type="SMR" id="Q6D3J6"/>
<dbReference type="STRING" id="218491.ECA2748"/>
<dbReference type="KEGG" id="eca:ECA2748"/>
<dbReference type="eggNOG" id="COG3082">
    <property type="taxonomic scope" value="Bacteria"/>
</dbReference>
<dbReference type="HOGENOM" id="CLU_175457_0_0_6"/>
<dbReference type="OrthoDB" id="5771474at2"/>
<dbReference type="Proteomes" id="UP000007966">
    <property type="component" value="Chromosome"/>
</dbReference>
<dbReference type="Gene3D" id="1.10.3390.10">
    <property type="entry name" value="YejL-like"/>
    <property type="match status" value="1"/>
</dbReference>
<dbReference type="HAMAP" id="MF_00816">
    <property type="entry name" value="UPF0352"/>
    <property type="match status" value="1"/>
</dbReference>
<dbReference type="InterPro" id="IPR009857">
    <property type="entry name" value="UPF0352"/>
</dbReference>
<dbReference type="InterPro" id="IPR023202">
    <property type="entry name" value="YejL_sf"/>
</dbReference>
<dbReference type="NCBIfam" id="NF010242">
    <property type="entry name" value="PRK13689.1"/>
    <property type="match status" value="1"/>
</dbReference>
<dbReference type="Pfam" id="PF07208">
    <property type="entry name" value="DUF1414"/>
    <property type="match status" value="1"/>
</dbReference>
<dbReference type="PIRSF" id="PIRSF006188">
    <property type="entry name" value="UCP006188"/>
    <property type="match status" value="1"/>
</dbReference>
<dbReference type="SUPFAM" id="SSF158651">
    <property type="entry name" value="YejL-like"/>
    <property type="match status" value="1"/>
</dbReference>
<comment type="similarity">
    <text evidence="1">Belongs to the UPF0352 family.</text>
</comment>
<evidence type="ECO:0000255" key="1">
    <source>
        <dbReference type="HAMAP-Rule" id="MF_00816"/>
    </source>
</evidence>